<accession>Q81TS7</accession>
<accession>Q6I210</accession>
<accession>Q6KVU7</accession>
<gene>
    <name type="ordered locus">BA_1187</name>
    <name type="ordered locus">GBAA_1187</name>
    <name type="ordered locus">BAS1098</name>
</gene>
<organism>
    <name type="scientific">Bacillus anthracis</name>
    <dbReference type="NCBI Taxonomy" id="1392"/>
    <lineage>
        <taxon>Bacteria</taxon>
        <taxon>Bacillati</taxon>
        <taxon>Bacillota</taxon>
        <taxon>Bacilli</taxon>
        <taxon>Bacillales</taxon>
        <taxon>Bacillaceae</taxon>
        <taxon>Bacillus</taxon>
        <taxon>Bacillus cereus group</taxon>
    </lineage>
</organism>
<protein>
    <recommendedName>
        <fullName evidence="1">UPF0736 protein BA_1187/GBAA_1187/BAS1098</fullName>
    </recommendedName>
</protein>
<comment type="similarity">
    <text evidence="1">Belongs to the UPF0736 family.</text>
</comment>
<reference key="1">
    <citation type="journal article" date="2003" name="Nature">
        <title>The genome sequence of Bacillus anthracis Ames and comparison to closely related bacteria.</title>
        <authorList>
            <person name="Read T.D."/>
            <person name="Peterson S.N."/>
            <person name="Tourasse N.J."/>
            <person name="Baillie L.W."/>
            <person name="Paulsen I.T."/>
            <person name="Nelson K.E."/>
            <person name="Tettelin H."/>
            <person name="Fouts D.E."/>
            <person name="Eisen J.A."/>
            <person name="Gill S.R."/>
            <person name="Holtzapple E.K."/>
            <person name="Okstad O.A."/>
            <person name="Helgason E."/>
            <person name="Rilstone J."/>
            <person name="Wu M."/>
            <person name="Kolonay J.F."/>
            <person name="Beanan M.J."/>
            <person name="Dodson R.J."/>
            <person name="Brinkac L.M."/>
            <person name="Gwinn M.L."/>
            <person name="DeBoy R.T."/>
            <person name="Madpu R."/>
            <person name="Daugherty S.C."/>
            <person name="Durkin A.S."/>
            <person name="Haft D.H."/>
            <person name="Nelson W.C."/>
            <person name="Peterson J.D."/>
            <person name="Pop M."/>
            <person name="Khouri H.M."/>
            <person name="Radune D."/>
            <person name="Benton J.L."/>
            <person name="Mahamoud Y."/>
            <person name="Jiang L."/>
            <person name="Hance I.R."/>
            <person name="Weidman J.F."/>
            <person name="Berry K.J."/>
            <person name="Plaut R.D."/>
            <person name="Wolf A.M."/>
            <person name="Watkins K.L."/>
            <person name="Nierman W.C."/>
            <person name="Hazen A."/>
            <person name="Cline R.T."/>
            <person name="Redmond C."/>
            <person name="Thwaite J.E."/>
            <person name="White O."/>
            <person name="Salzberg S.L."/>
            <person name="Thomason B."/>
            <person name="Friedlander A.M."/>
            <person name="Koehler T.M."/>
            <person name="Hanna P.C."/>
            <person name="Kolstoe A.-B."/>
            <person name="Fraser C.M."/>
        </authorList>
    </citation>
    <scope>NUCLEOTIDE SEQUENCE [LARGE SCALE GENOMIC DNA]</scope>
    <source>
        <strain>Ames / isolate Porton</strain>
    </source>
</reference>
<reference key="2">
    <citation type="submission" date="2004-01" db="EMBL/GenBank/DDBJ databases">
        <title>Complete genome sequence of Bacillus anthracis Sterne.</title>
        <authorList>
            <person name="Brettin T.S."/>
            <person name="Bruce D."/>
            <person name="Challacombe J.F."/>
            <person name="Gilna P."/>
            <person name="Han C."/>
            <person name="Hill K."/>
            <person name="Hitchcock P."/>
            <person name="Jackson P."/>
            <person name="Keim P."/>
            <person name="Longmire J."/>
            <person name="Lucas S."/>
            <person name="Okinaka R."/>
            <person name="Richardson P."/>
            <person name="Rubin E."/>
            <person name="Tice H."/>
        </authorList>
    </citation>
    <scope>NUCLEOTIDE SEQUENCE [LARGE SCALE GENOMIC DNA]</scope>
    <source>
        <strain>Sterne</strain>
    </source>
</reference>
<reference key="3">
    <citation type="journal article" date="2009" name="J. Bacteriol.">
        <title>The complete genome sequence of Bacillus anthracis Ames 'Ancestor'.</title>
        <authorList>
            <person name="Ravel J."/>
            <person name="Jiang L."/>
            <person name="Stanley S.T."/>
            <person name="Wilson M.R."/>
            <person name="Decker R.S."/>
            <person name="Read T.D."/>
            <person name="Worsham P."/>
            <person name="Keim P.S."/>
            <person name="Salzberg S.L."/>
            <person name="Fraser-Liggett C.M."/>
            <person name="Rasko D.A."/>
        </authorList>
    </citation>
    <scope>NUCLEOTIDE SEQUENCE [LARGE SCALE GENOMIC DNA]</scope>
    <source>
        <strain>Ames ancestor</strain>
    </source>
</reference>
<name>Y1098_BACAN</name>
<evidence type="ECO:0000255" key="1">
    <source>
        <dbReference type="HAMAP-Rule" id="MF_01860"/>
    </source>
</evidence>
<sequence length="248" mass="30052">MLYLHDVWVNWFEGEENGYNVCHFYEWRKDDTIELLDQVPLLKVDSTLYHYIENELLELPQKLLEDVHHKAYIRKNHERLQQEYCFVVTDGKGIIAIDTIGYNVPIRKSRLIPRQEQMVYEMVENVQAEKYEFQVEEMEKEHHILSPSPFVMNGLTRKERQLKQLLFMALDQLHTTKNTAEIRYWFTEWDPSAYGMVQHMEFEDIWAKLYDEAKTGWSEKHEQLCERLVKGQPFFEKLWEMENEQKVN</sequence>
<feature type="chain" id="PRO_0000369135" description="UPF0736 protein BA_1187/GBAA_1187/BAS1098">
    <location>
        <begin position="1"/>
        <end position="248"/>
    </location>
</feature>
<dbReference type="EMBL" id="AE016879">
    <property type="protein sequence ID" value="AAP25150.1"/>
    <property type="molecule type" value="Genomic_DNA"/>
</dbReference>
<dbReference type="EMBL" id="AE017334">
    <property type="protein sequence ID" value="AAT30275.1"/>
    <property type="molecule type" value="Genomic_DNA"/>
</dbReference>
<dbReference type="EMBL" id="AE017225">
    <property type="protein sequence ID" value="AAT53421.1"/>
    <property type="molecule type" value="Genomic_DNA"/>
</dbReference>
<dbReference type="RefSeq" id="NP_843664.1">
    <property type="nucleotide sequence ID" value="NC_003997.3"/>
</dbReference>
<dbReference type="RefSeq" id="WP_000966134.1">
    <property type="nucleotide sequence ID" value="NZ_WXXJ01000044.1"/>
</dbReference>
<dbReference type="RefSeq" id="YP_027370.1">
    <property type="nucleotide sequence ID" value="NC_005945.1"/>
</dbReference>
<dbReference type="SMR" id="Q81TS7"/>
<dbReference type="STRING" id="261594.GBAA_1187"/>
<dbReference type="DNASU" id="1089253"/>
<dbReference type="GeneID" id="45021195"/>
<dbReference type="KEGG" id="ban:BA_1187"/>
<dbReference type="KEGG" id="bar:GBAA_1187"/>
<dbReference type="KEGG" id="bat:BAS1098"/>
<dbReference type="PATRIC" id="fig|198094.11.peg.1166"/>
<dbReference type="eggNOG" id="ENOG502Z8PJ">
    <property type="taxonomic scope" value="Bacteria"/>
</dbReference>
<dbReference type="HOGENOM" id="CLU_1101152_0_0_9"/>
<dbReference type="OMA" id="AEVRYWY"/>
<dbReference type="OrthoDB" id="2960746at2"/>
<dbReference type="Proteomes" id="UP000000427">
    <property type="component" value="Chromosome"/>
</dbReference>
<dbReference type="Proteomes" id="UP000000594">
    <property type="component" value="Chromosome"/>
</dbReference>
<dbReference type="HAMAP" id="MF_01860">
    <property type="entry name" value="UPF0736"/>
    <property type="match status" value="1"/>
</dbReference>
<dbReference type="InterPro" id="IPR020909">
    <property type="entry name" value="UPF0736"/>
</dbReference>
<dbReference type="Pfam" id="PF12227">
    <property type="entry name" value="DUF3603"/>
    <property type="match status" value="1"/>
</dbReference>
<proteinExistence type="inferred from homology"/>
<keyword id="KW-1185">Reference proteome</keyword>